<gene>
    <name evidence="1" type="primary">pheS</name>
    <name type="ordered locus">Dtur_1310</name>
</gene>
<feature type="chain" id="PRO_1000119392" description="Phenylalanine--tRNA ligase alpha subunit">
    <location>
        <begin position="1"/>
        <end position="339"/>
    </location>
</feature>
<feature type="binding site" evidence="1">
    <location>
        <position position="254"/>
    </location>
    <ligand>
        <name>Mg(2+)</name>
        <dbReference type="ChEBI" id="CHEBI:18420"/>
        <note>shared with beta subunit</note>
    </ligand>
</feature>
<comment type="catalytic activity">
    <reaction evidence="1">
        <text>tRNA(Phe) + L-phenylalanine + ATP = L-phenylalanyl-tRNA(Phe) + AMP + diphosphate + H(+)</text>
        <dbReference type="Rhea" id="RHEA:19413"/>
        <dbReference type="Rhea" id="RHEA-COMP:9668"/>
        <dbReference type="Rhea" id="RHEA-COMP:9699"/>
        <dbReference type="ChEBI" id="CHEBI:15378"/>
        <dbReference type="ChEBI" id="CHEBI:30616"/>
        <dbReference type="ChEBI" id="CHEBI:33019"/>
        <dbReference type="ChEBI" id="CHEBI:58095"/>
        <dbReference type="ChEBI" id="CHEBI:78442"/>
        <dbReference type="ChEBI" id="CHEBI:78531"/>
        <dbReference type="ChEBI" id="CHEBI:456215"/>
        <dbReference type="EC" id="6.1.1.20"/>
    </reaction>
</comment>
<comment type="cofactor">
    <cofactor evidence="1">
        <name>Mg(2+)</name>
        <dbReference type="ChEBI" id="CHEBI:18420"/>
    </cofactor>
    <text evidence="1">Binds 2 magnesium ions per tetramer.</text>
</comment>
<comment type="subunit">
    <text evidence="1">Tetramer of two alpha and two beta subunits.</text>
</comment>
<comment type="subcellular location">
    <subcellularLocation>
        <location evidence="1">Cytoplasm</location>
    </subcellularLocation>
</comment>
<comment type="similarity">
    <text evidence="1">Belongs to the class-II aminoacyl-tRNA synthetase family. Phe-tRNA synthetase alpha subunit type 1 subfamily.</text>
</comment>
<keyword id="KW-0030">Aminoacyl-tRNA synthetase</keyword>
<keyword id="KW-0067">ATP-binding</keyword>
<keyword id="KW-0963">Cytoplasm</keyword>
<keyword id="KW-0436">Ligase</keyword>
<keyword id="KW-0460">Magnesium</keyword>
<keyword id="KW-0479">Metal-binding</keyword>
<keyword id="KW-0547">Nucleotide-binding</keyword>
<keyword id="KW-0648">Protein biosynthesis</keyword>
<keyword id="KW-1185">Reference proteome</keyword>
<sequence length="339" mass="39425">MNEEYIEKFKEAKEKILRAQNLTELEEVKRVYLGKQGFLTQILRSIGKMPQEERAKWGRLANEWKEELESLYENKEKELKYLTLQKKLEEEKIDITLPGRRKILGRIHPINQVIEEIVMVFKEMGFQVVYGPELETDYYNFTALNIPMDHPVRESHDSFYIDKEHLLRTQTSPVQIRVMENKKPPLRVVAPGKCYRRDIPDATHSPMFHQIEGLVVDTDVTFAELKGVLTIFAHRLFGKDRKVYFIPSYFPFTEPSAEMYVECGVCKGAGCKACGYSGVLEILGCGMVHPQVFRIVGIDPEKYTGFAFGMGPDRIAMQIYGIDDIRLFYENDVRFLKQF</sequence>
<organism>
    <name type="scientific">Dictyoglomus turgidum (strain DSM 6724 / Z-1310)</name>
    <dbReference type="NCBI Taxonomy" id="515635"/>
    <lineage>
        <taxon>Bacteria</taxon>
        <taxon>Pseudomonadati</taxon>
        <taxon>Dictyoglomota</taxon>
        <taxon>Dictyoglomia</taxon>
        <taxon>Dictyoglomales</taxon>
        <taxon>Dictyoglomaceae</taxon>
        <taxon>Dictyoglomus</taxon>
    </lineage>
</organism>
<name>SYFA_DICTD</name>
<reference key="1">
    <citation type="journal article" date="2016" name="Front. Microbiol.">
        <title>The complete genome sequence of hyperthermophile Dictyoglomus turgidum DSM 6724 reveals a specialized carbohydrate fermentor.</title>
        <authorList>
            <person name="Brumm P.J."/>
            <person name="Gowda K."/>
            <person name="Robb F.T."/>
            <person name="Mead D.A."/>
        </authorList>
    </citation>
    <scope>NUCLEOTIDE SEQUENCE [LARGE SCALE GENOMIC DNA]</scope>
    <source>
        <strain>DSM 6724 / Z-1310</strain>
    </source>
</reference>
<protein>
    <recommendedName>
        <fullName evidence="1">Phenylalanine--tRNA ligase alpha subunit</fullName>
        <ecNumber evidence="1">6.1.1.20</ecNumber>
    </recommendedName>
    <alternativeName>
        <fullName evidence="1">Phenylalanyl-tRNA synthetase alpha subunit</fullName>
        <shortName evidence="1">PheRS</shortName>
    </alternativeName>
</protein>
<proteinExistence type="inferred from homology"/>
<dbReference type="EC" id="6.1.1.20" evidence="1"/>
<dbReference type="EMBL" id="CP001251">
    <property type="protein sequence ID" value="ACK42584.1"/>
    <property type="molecule type" value="Genomic_DNA"/>
</dbReference>
<dbReference type="RefSeq" id="WP_012583666.1">
    <property type="nucleotide sequence ID" value="NC_011661.1"/>
</dbReference>
<dbReference type="RefSeq" id="YP_002353198.1">
    <property type="nucleotide sequence ID" value="NC_011661.1"/>
</dbReference>
<dbReference type="SMR" id="B8E0D9"/>
<dbReference type="FunCoup" id="B8E0D9">
    <property type="interactions" value="379"/>
</dbReference>
<dbReference type="STRING" id="515635.Dtur_1310"/>
<dbReference type="EnsemblBacteria" id="ACK42584">
    <property type="protein sequence ID" value="ACK42584"/>
    <property type="gene ID" value="Dtur_1310"/>
</dbReference>
<dbReference type="KEGG" id="dtu:Dtur_1310"/>
<dbReference type="PATRIC" id="fig|515635.4.peg.1355"/>
<dbReference type="eggNOG" id="COG0016">
    <property type="taxonomic scope" value="Bacteria"/>
</dbReference>
<dbReference type="HOGENOM" id="CLU_025086_0_1_0"/>
<dbReference type="InParanoid" id="B8E0D9"/>
<dbReference type="OrthoDB" id="9800719at2"/>
<dbReference type="Proteomes" id="UP000007719">
    <property type="component" value="Chromosome"/>
</dbReference>
<dbReference type="GO" id="GO:0005737">
    <property type="term" value="C:cytoplasm"/>
    <property type="evidence" value="ECO:0000318"/>
    <property type="project" value="GO_Central"/>
</dbReference>
<dbReference type="GO" id="GO:0005524">
    <property type="term" value="F:ATP binding"/>
    <property type="evidence" value="ECO:0007669"/>
    <property type="project" value="UniProtKB-UniRule"/>
</dbReference>
<dbReference type="GO" id="GO:0000287">
    <property type="term" value="F:magnesium ion binding"/>
    <property type="evidence" value="ECO:0007669"/>
    <property type="project" value="UniProtKB-UniRule"/>
</dbReference>
<dbReference type="GO" id="GO:0004826">
    <property type="term" value="F:phenylalanine-tRNA ligase activity"/>
    <property type="evidence" value="ECO:0000318"/>
    <property type="project" value="GO_Central"/>
</dbReference>
<dbReference type="GO" id="GO:0000049">
    <property type="term" value="F:tRNA binding"/>
    <property type="evidence" value="ECO:0007669"/>
    <property type="project" value="InterPro"/>
</dbReference>
<dbReference type="GO" id="GO:0006432">
    <property type="term" value="P:phenylalanyl-tRNA aminoacylation"/>
    <property type="evidence" value="ECO:0000318"/>
    <property type="project" value="GO_Central"/>
</dbReference>
<dbReference type="CDD" id="cd00496">
    <property type="entry name" value="PheRS_alpha_core"/>
    <property type="match status" value="1"/>
</dbReference>
<dbReference type="FunFam" id="3.30.930.10:FF:000003">
    <property type="entry name" value="Phenylalanine--tRNA ligase alpha subunit"/>
    <property type="match status" value="1"/>
</dbReference>
<dbReference type="Gene3D" id="3.30.930.10">
    <property type="entry name" value="Bira Bifunctional Protein, Domain 2"/>
    <property type="match status" value="1"/>
</dbReference>
<dbReference type="HAMAP" id="MF_00281">
    <property type="entry name" value="Phe_tRNA_synth_alpha1"/>
    <property type="match status" value="1"/>
</dbReference>
<dbReference type="InterPro" id="IPR006195">
    <property type="entry name" value="aa-tRNA-synth_II"/>
</dbReference>
<dbReference type="InterPro" id="IPR045864">
    <property type="entry name" value="aa-tRNA-synth_II/BPL/LPL"/>
</dbReference>
<dbReference type="InterPro" id="IPR004529">
    <property type="entry name" value="Phe-tRNA-synth_IIc_asu"/>
</dbReference>
<dbReference type="InterPro" id="IPR004188">
    <property type="entry name" value="Phe-tRNA_ligase_II_N"/>
</dbReference>
<dbReference type="InterPro" id="IPR022911">
    <property type="entry name" value="Phe_tRNA_ligase_alpha1_bac"/>
</dbReference>
<dbReference type="InterPro" id="IPR002319">
    <property type="entry name" value="Phenylalanyl-tRNA_Synthase"/>
</dbReference>
<dbReference type="InterPro" id="IPR010978">
    <property type="entry name" value="tRNA-bd_arm"/>
</dbReference>
<dbReference type="NCBIfam" id="TIGR00468">
    <property type="entry name" value="pheS"/>
    <property type="match status" value="1"/>
</dbReference>
<dbReference type="PANTHER" id="PTHR11538:SF41">
    <property type="entry name" value="PHENYLALANINE--TRNA LIGASE, MITOCHONDRIAL"/>
    <property type="match status" value="1"/>
</dbReference>
<dbReference type="PANTHER" id="PTHR11538">
    <property type="entry name" value="PHENYLALANYL-TRNA SYNTHETASE"/>
    <property type="match status" value="1"/>
</dbReference>
<dbReference type="Pfam" id="PF02912">
    <property type="entry name" value="Phe_tRNA-synt_N"/>
    <property type="match status" value="1"/>
</dbReference>
<dbReference type="Pfam" id="PF01409">
    <property type="entry name" value="tRNA-synt_2d"/>
    <property type="match status" value="1"/>
</dbReference>
<dbReference type="SUPFAM" id="SSF55681">
    <property type="entry name" value="Class II aaRS and biotin synthetases"/>
    <property type="match status" value="1"/>
</dbReference>
<dbReference type="SUPFAM" id="SSF46589">
    <property type="entry name" value="tRNA-binding arm"/>
    <property type="match status" value="1"/>
</dbReference>
<dbReference type="PROSITE" id="PS50862">
    <property type="entry name" value="AA_TRNA_LIGASE_II"/>
    <property type="match status" value="1"/>
</dbReference>
<evidence type="ECO:0000255" key="1">
    <source>
        <dbReference type="HAMAP-Rule" id="MF_00281"/>
    </source>
</evidence>
<accession>B8E0D9</accession>